<organism>
    <name type="scientific">Parvibaculum lavamentivorans (strain DS-1 / DSM 13023 / NCIMB 13966)</name>
    <dbReference type="NCBI Taxonomy" id="402881"/>
    <lineage>
        <taxon>Bacteria</taxon>
        <taxon>Pseudomonadati</taxon>
        <taxon>Pseudomonadota</taxon>
        <taxon>Alphaproteobacteria</taxon>
        <taxon>Hyphomicrobiales</taxon>
        <taxon>Parvibaculaceae</taxon>
        <taxon>Parvibaculum</taxon>
    </lineage>
</organism>
<proteinExistence type="inferred from homology"/>
<protein>
    <recommendedName>
        <fullName evidence="1">N-(5'-phosphoribosyl)anthranilate isomerase</fullName>
        <shortName evidence="1">PRAI</shortName>
        <ecNumber evidence="1">5.3.1.24</ecNumber>
    </recommendedName>
</protein>
<gene>
    <name evidence="1" type="primary">trpF</name>
    <name type="ordered locus">Plav_0144</name>
</gene>
<keyword id="KW-0028">Amino-acid biosynthesis</keyword>
<keyword id="KW-0057">Aromatic amino acid biosynthesis</keyword>
<keyword id="KW-0413">Isomerase</keyword>
<keyword id="KW-1185">Reference proteome</keyword>
<keyword id="KW-0822">Tryptophan biosynthesis</keyword>
<reference key="1">
    <citation type="journal article" date="2011" name="Stand. Genomic Sci.">
        <title>Complete genome sequence of Parvibaculum lavamentivorans type strain (DS-1(T)).</title>
        <authorList>
            <person name="Schleheck D."/>
            <person name="Weiss M."/>
            <person name="Pitluck S."/>
            <person name="Bruce D."/>
            <person name="Land M.L."/>
            <person name="Han S."/>
            <person name="Saunders E."/>
            <person name="Tapia R."/>
            <person name="Detter C."/>
            <person name="Brettin T."/>
            <person name="Han J."/>
            <person name="Woyke T."/>
            <person name="Goodwin L."/>
            <person name="Pennacchio L."/>
            <person name="Nolan M."/>
            <person name="Cook A.M."/>
            <person name="Kjelleberg S."/>
            <person name="Thomas T."/>
        </authorList>
    </citation>
    <scope>NUCLEOTIDE SEQUENCE [LARGE SCALE GENOMIC DNA]</scope>
    <source>
        <strain>DS-1 / DSM 13023 / NCIMB 13966</strain>
    </source>
</reference>
<accession>A7HPD4</accession>
<sequence>MSVQVKICGLSTPETIEASVSAGADYLGFVFFSRSPRHLSYELAARLSGYVPASVPKVALTVDADDAMLDAVVEALRPDILQLHGDETPQRLVEIKARYGLTLMKAICVAQPEDPLTAAIYRDSADLLLFDAKPPKSMAGALPGGNGLVFDWSLIAGHRPETPWMLSGGLNAENVAEAVRITGAEAVDVSSGIEEGPGRKTPELIEAFIRAAKRA</sequence>
<comment type="catalytic activity">
    <reaction evidence="1">
        <text>N-(5-phospho-beta-D-ribosyl)anthranilate = 1-(2-carboxyphenylamino)-1-deoxy-D-ribulose 5-phosphate</text>
        <dbReference type="Rhea" id="RHEA:21540"/>
        <dbReference type="ChEBI" id="CHEBI:18277"/>
        <dbReference type="ChEBI" id="CHEBI:58613"/>
        <dbReference type="EC" id="5.3.1.24"/>
    </reaction>
</comment>
<comment type="pathway">
    <text evidence="1">Amino-acid biosynthesis; L-tryptophan biosynthesis; L-tryptophan from chorismate: step 3/5.</text>
</comment>
<comment type="similarity">
    <text evidence="1">Belongs to the TrpF family.</text>
</comment>
<feature type="chain" id="PRO_1000071442" description="N-(5'-phosphoribosyl)anthranilate isomerase">
    <location>
        <begin position="1"/>
        <end position="215"/>
    </location>
</feature>
<dbReference type="EC" id="5.3.1.24" evidence="1"/>
<dbReference type="EMBL" id="CP000774">
    <property type="protein sequence ID" value="ABS61767.1"/>
    <property type="molecule type" value="Genomic_DNA"/>
</dbReference>
<dbReference type="RefSeq" id="WP_011995058.1">
    <property type="nucleotide sequence ID" value="NC_009719.1"/>
</dbReference>
<dbReference type="SMR" id="A7HPD4"/>
<dbReference type="STRING" id="402881.Plav_0144"/>
<dbReference type="KEGG" id="pla:Plav_0144"/>
<dbReference type="eggNOG" id="COG0135">
    <property type="taxonomic scope" value="Bacteria"/>
</dbReference>
<dbReference type="HOGENOM" id="CLU_076364_1_1_5"/>
<dbReference type="OrthoDB" id="9796196at2"/>
<dbReference type="UniPathway" id="UPA00035">
    <property type="reaction ID" value="UER00042"/>
</dbReference>
<dbReference type="Proteomes" id="UP000006377">
    <property type="component" value="Chromosome"/>
</dbReference>
<dbReference type="GO" id="GO:0004640">
    <property type="term" value="F:phosphoribosylanthranilate isomerase activity"/>
    <property type="evidence" value="ECO:0007669"/>
    <property type="project" value="UniProtKB-UniRule"/>
</dbReference>
<dbReference type="GO" id="GO:0000162">
    <property type="term" value="P:L-tryptophan biosynthetic process"/>
    <property type="evidence" value="ECO:0007669"/>
    <property type="project" value="UniProtKB-UniRule"/>
</dbReference>
<dbReference type="CDD" id="cd00405">
    <property type="entry name" value="PRAI"/>
    <property type="match status" value="1"/>
</dbReference>
<dbReference type="Gene3D" id="3.20.20.70">
    <property type="entry name" value="Aldolase class I"/>
    <property type="match status" value="1"/>
</dbReference>
<dbReference type="HAMAP" id="MF_00135">
    <property type="entry name" value="PRAI"/>
    <property type="match status" value="1"/>
</dbReference>
<dbReference type="InterPro" id="IPR013785">
    <property type="entry name" value="Aldolase_TIM"/>
</dbReference>
<dbReference type="InterPro" id="IPR001240">
    <property type="entry name" value="PRAI_dom"/>
</dbReference>
<dbReference type="InterPro" id="IPR011060">
    <property type="entry name" value="RibuloseP-bd_barrel"/>
</dbReference>
<dbReference type="InterPro" id="IPR044643">
    <property type="entry name" value="TrpF_fam"/>
</dbReference>
<dbReference type="NCBIfam" id="NF002295">
    <property type="entry name" value="PRK01222.1-1"/>
    <property type="match status" value="1"/>
</dbReference>
<dbReference type="PANTHER" id="PTHR42894">
    <property type="entry name" value="N-(5'-PHOSPHORIBOSYL)ANTHRANILATE ISOMERASE"/>
    <property type="match status" value="1"/>
</dbReference>
<dbReference type="PANTHER" id="PTHR42894:SF1">
    <property type="entry name" value="N-(5'-PHOSPHORIBOSYL)ANTHRANILATE ISOMERASE"/>
    <property type="match status" value="1"/>
</dbReference>
<dbReference type="Pfam" id="PF00697">
    <property type="entry name" value="PRAI"/>
    <property type="match status" value="1"/>
</dbReference>
<dbReference type="SUPFAM" id="SSF51366">
    <property type="entry name" value="Ribulose-phoshate binding barrel"/>
    <property type="match status" value="1"/>
</dbReference>
<name>TRPF_PARL1</name>
<evidence type="ECO:0000255" key="1">
    <source>
        <dbReference type="HAMAP-Rule" id="MF_00135"/>
    </source>
</evidence>